<sequence>MAAKIRRNDEVIVLAGKDKGKKGKVTKVLATGKVIVEGINLVKKHQKPVPALGIQGGIVEQEAAIDVSNVAIFNAATGKADRIGFRFEDGQKVRFFKSNGETVSN</sequence>
<protein>
    <recommendedName>
        <fullName evidence="1">Large ribosomal subunit protein uL24</fullName>
    </recommendedName>
    <alternativeName>
        <fullName evidence="2">50S ribosomal protein L24</fullName>
    </alternativeName>
</protein>
<comment type="function">
    <text evidence="1">One of two assembly initiator proteins, it binds directly to the 5'-end of the 23S rRNA, where it nucleates assembly of the 50S subunit.</text>
</comment>
<comment type="function">
    <text evidence="1">One of the proteins that surrounds the polypeptide exit tunnel on the outside of the subunit.</text>
</comment>
<comment type="subunit">
    <text evidence="1">Part of the 50S ribosomal subunit.</text>
</comment>
<comment type="similarity">
    <text evidence="1">Belongs to the universal ribosomal protein uL24 family.</text>
</comment>
<reference key="1">
    <citation type="journal article" date="2003" name="Genome Res.">
        <title>Comparative genome analysis of Vibrio vulnificus, a marine pathogen.</title>
        <authorList>
            <person name="Chen C.-Y."/>
            <person name="Wu K.-M."/>
            <person name="Chang Y.-C."/>
            <person name="Chang C.-H."/>
            <person name="Tsai H.-C."/>
            <person name="Liao T.-L."/>
            <person name="Liu Y.-M."/>
            <person name="Chen H.-J."/>
            <person name="Shen A.B.-T."/>
            <person name="Li J.-C."/>
            <person name="Su T.-L."/>
            <person name="Shao C.-P."/>
            <person name="Lee C.-T."/>
            <person name="Hor L.-I."/>
            <person name="Tsai S.-F."/>
        </authorList>
    </citation>
    <scope>NUCLEOTIDE SEQUENCE [LARGE SCALE GENOMIC DNA]</scope>
    <source>
        <strain>YJ016</strain>
    </source>
</reference>
<organism>
    <name type="scientific">Vibrio vulnificus (strain YJ016)</name>
    <dbReference type="NCBI Taxonomy" id="196600"/>
    <lineage>
        <taxon>Bacteria</taxon>
        <taxon>Pseudomonadati</taxon>
        <taxon>Pseudomonadota</taxon>
        <taxon>Gammaproteobacteria</taxon>
        <taxon>Vibrionales</taxon>
        <taxon>Vibrionaceae</taxon>
        <taxon>Vibrio</taxon>
    </lineage>
</organism>
<accession>Q7MPH7</accession>
<name>RL24_VIBVY</name>
<gene>
    <name evidence="1" type="primary">rplX</name>
    <name type="ordered locus">VV0386</name>
</gene>
<proteinExistence type="inferred from homology"/>
<evidence type="ECO:0000255" key="1">
    <source>
        <dbReference type="HAMAP-Rule" id="MF_01326"/>
    </source>
</evidence>
<evidence type="ECO:0000305" key="2"/>
<feature type="chain" id="PRO_0000130751" description="Large ribosomal subunit protein uL24">
    <location>
        <begin position="1"/>
        <end position="105"/>
    </location>
</feature>
<dbReference type="EMBL" id="BA000037">
    <property type="protein sequence ID" value="BAC93150.1"/>
    <property type="molecule type" value="Genomic_DNA"/>
</dbReference>
<dbReference type="RefSeq" id="WP_011078822.1">
    <property type="nucleotide sequence ID" value="NC_005139.1"/>
</dbReference>
<dbReference type="SMR" id="Q7MPH7"/>
<dbReference type="STRING" id="672.VV93_v1c03570"/>
<dbReference type="GeneID" id="43685298"/>
<dbReference type="KEGG" id="vvy:VV0386"/>
<dbReference type="eggNOG" id="COG0198">
    <property type="taxonomic scope" value="Bacteria"/>
</dbReference>
<dbReference type="HOGENOM" id="CLU_093315_2_2_6"/>
<dbReference type="Proteomes" id="UP000002675">
    <property type="component" value="Chromosome I"/>
</dbReference>
<dbReference type="GO" id="GO:1990904">
    <property type="term" value="C:ribonucleoprotein complex"/>
    <property type="evidence" value="ECO:0007669"/>
    <property type="project" value="UniProtKB-KW"/>
</dbReference>
<dbReference type="GO" id="GO:0005840">
    <property type="term" value="C:ribosome"/>
    <property type="evidence" value="ECO:0007669"/>
    <property type="project" value="UniProtKB-KW"/>
</dbReference>
<dbReference type="GO" id="GO:0019843">
    <property type="term" value="F:rRNA binding"/>
    <property type="evidence" value="ECO:0007669"/>
    <property type="project" value="UniProtKB-UniRule"/>
</dbReference>
<dbReference type="GO" id="GO:0003735">
    <property type="term" value="F:structural constituent of ribosome"/>
    <property type="evidence" value="ECO:0007669"/>
    <property type="project" value="InterPro"/>
</dbReference>
<dbReference type="GO" id="GO:0006412">
    <property type="term" value="P:translation"/>
    <property type="evidence" value="ECO:0007669"/>
    <property type="project" value="UniProtKB-UniRule"/>
</dbReference>
<dbReference type="CDD" id="cd06089">
    <property type="entry name" value="KOW_RPL26"/>
    <property type="match status" value="1"/>
</dbReference>
<dbReference type="FunFam" id="2.30.30.30:FF:000004">
    <property type="entry name" value="50S ribosomal protein L24"/>
    <property type="match status" value="1"/>
</dbReference>
<dbReference type="Gene3D" id="2.30.30.30">
    <property type="match status" value="1"/>
</dbReference>
<dbReference type="HAMAP" id="MF_01326_B">
    <property type="entry name" value="Ribosomal_uL24_B"/>
    <property type="match status" value="1"/>
</dbReference>
<dbReference type="InterPro" id="IPR005824">
    <property type="entry name" value="KOW"/>
</dbReference>
<dbReference type="InterPro" id="IPR014722">
    <property type="entry name" value="Rib_uL2_dom2"/>
</dbReference>
<dbReference type="InterPro" id="IPR003256">
    <property type="entry name" value="Ribosomal_uL24"/>
</dbReference>
<dbReference type="InterPro" id="IPR005825">
    <property type="entry name" value="Ribosomal_uL24_CS"/>
</dbReference>
<dbReference type="InterPro" id="IPR041988">
    <property type="entry name" value="Ribosomal_uL24_KOW"/>
</dbReference>
<dbReference type="InterPro" id="IPR008991">
    <property type="entry name" value="Translation_prot_SH3-like_sf"/>
</dbReference>
<dbReference type="NCBIfam" id="TIGR01079">
    <property type="entry name" value="rplX_bact"/>
    <property type="match status" value="1"/>
</dbReference>
<dbReference type="PANTHER" id="PTHR12903">
    <property type="entry name" value="MITOCHONDRIAL RIBOSOMAL PROTEIN L24"/>
    <property type="match status" value="1"/>
</dbReference>
<dbReference type="Pfam" id="PF00467">
    <property type="entry name" value="KOW"/>
    <property type="match status" value="1"/>
</dbReference>
<dbReference type="Pfam" id="PF17136">
    <property type="entry name" value="ribosomal_L24"/>
    <property type="match status" value="1"/>
</dbReference>
<dbReference type="SMART" id="SM00739">
    <property type="entry name" value="KOW"/>
    <property type="match status" value="1"/>
</dbReference>
<dbReference type="SUPFAM" id="SSF50104">
    <property type="entry name" value="Translation proteins SH3-like domain"/>
    <property type="match status" value="1"/>
</dbReference>
<dbReference type="PROSITE" id="PS01108">
    <property type="entry name" value="RIBOSOMAL_L24"/>
    <property type="match status" value="1"/>
</dbReference>
<keyword id="KW-0687">Ribonucleoprotein</keyword>
<keyword id="KW-0689">Ribosomal protein</keyword>
<keyword id="KW-0694">RNA-binding</keyword>
<keyword id="KW-0699">rRNA-binding</keyword>